<protein>
    <recommendedName>
        <fullName evidence="1">Aspartate-semialdehyde dehydrogenase</fullName>
        <shortName evidence="1">ASA dehydrogenase</shortName>
        <shortName evidence="1">ASADH</shortName>
        <ecNumber evidence="1">1.2.1.11</ecNumber>
    </recommendedName>
    <alternativeName>
        <fullName evidence="1">Aspartate-beta-semialdehyde dehydrogenase</fullName>
    </alternativeName>
</protein>
<name>DHAS_SHESP</name>
<accession>Q56732</accession>
<feature type="chain" id="PRO_0000141389" description="Aspartate-semialdehyde dehydrogenase">
    <location>
        <begin position="1"/>
        <end position="338"/>
    </location>
</feature>
<feature type="active site" description="Acyl-thioester intermediate" evidence="1">
    <location>
        <position position="132"/>
    </location>
</feature>
<feature type="active site" description="Proton acceptor" evidence="1">
    <location>
        <position position="245"/>
    </location>
</feature>
<feature type="binding site" evidence="1">
    <location>
        <begin position="13"/>
        <end position="16"/>
    </location>
    <ligand>
        <name>NADP(+)</name>
        <dbReference type="ChEBI" id="CHEBI:58349"/>
    </ligand>
</feature>
<feature type="binding site" evidence="1">
    <location>
        <begin position="41"/>
        <end position="42"/>
    </location>
    <ligand>
        <name>NADP(+)</name>
        <dbReference type="ChEBI" id="CHEBI:58349"/>
    </ligand>
</feature>
<feature type="binding site" evidence="1">
    <location>
        <position position="101"/>
    </location>
    <ligand>
        <name>phosphate</name>
        <dbReference type="ChEBI" id="CHEBI:43474"/>
    </ligand>
</feature>
<feature type="binding site" evidence="1">
    <location>
        <position position="159"/>
    </location>
    <ligand>
        <name>substrate</name>
    </ligand>
</feature>
<feature type="binding site" evidence="1">
    <location>
        <begin position="162"/>
        <end position="163"/>
    </location>
    <ligand>
        <name>NADP(+)</name>
        <dbReference type="ChEBI" id="CHEBI:58349"/>
    </ligand>
</feature>
<feature type="binding site" evidence="1">
    <location>
        <position position="187"/>
    </location>
    <ligand>
        <name>NADP(+)</name>
        <dbReference type="ChEBI" id="CHEBI:58349"/>
    </ligand>
</feature>
<feature type="binding site" evidence="1">
    <location>
        <position position="216"/>
    </location>
    <ligand>
        <name>phosphate</name>
        <dbReference type="ChEBI" id="CHEBI:43474"/>
    </ligand>
</feature>
<feature type="binding site" evidence="1">
    <location>
        <position position="238"/>
    </location>
    <ligand>
        <name>substrate</name>
    </ligand>
</feature>
<feature type="binding site" evidence="1">
    <location>
        <position position="317"/>
    </location>
    <ligand>
        <name>NADP(+)</name>
        <dbReference type="ChEBI" id="CHEBI:58349"/>
    </ligand>
</feature>
<gene>
    <name evidence="1" type="primary">asd</name>
</gene>
<evidence type="ECO:0000255" key="1">
    <source>
        <dbReference type="HAMAP-Rule" id="MF_02121"/>
    </source>
</evidence>
<proteinExistence type="inferred from homology"/>
<reference key="1">
    <citation type="journal article" date="1997" name="J. Biochem.">
        <title>Comparison of the gene expression of aspartate beta-D-semialdehyde dehydrogenase at elevated hydrostatic pressure in deep-sea bacteria.</title>
        <authorList>
            <person name="Kato C."/>
            <person name="Smorawinska M."/>
            <person name="Li L."/>
            <person name="Horikoshi K."/>
        </authorList>
    </citation>
    <scope>NUCLEOTIDE SEQUENCE [GENOMIC DNA]</scope>
</reference>
<dbReference type="EC" id="1.2.1.11" evidence="1"/>
<dbReference type="EMBL" id="D49539">
    <property type="protein sequence ID" value="BAA08488.1"/>
    <property type="molecule type" value="Genomic_DNA"/>
</dbReference>
<dbReference type="PIR" id="JC5435">
    <property type="entry name" value="JC5435"/>
</dbReference>
<dbReference type="SMR" id="Q56732"/>
<dbReference type="UniPathway" id="UPA00034">
    <property type="reaction ID" value="UER00016"/>
</dbReference>
<dbReference type="UniPathway" id="UPA00050">
    <property type="reaction ID" value="UER00463"/>
</dbReference>
<dbReference type="UniPathway" id="UPA00051">
    <property type="reaction ID" value="UER00464"/>
</dbReference>
<dbReference type="GO" id="GO:0004073">
    <property type="term" value="F:aspartate-semialdehyde dehydrogenase activity"/>
    <property type="evidence" value="ECO:0007669"/>
    <property type="project" value="UniProtKB-UniRule"/>
</dbReference>
<dbReference type="GO" id="GO:0051287">
    <property type="term" value="F:NAD binding"/>
    <property type="evidence" value="ECO:0007669"/>
    <property type="project" value="InterPro"/>
</dbReference>
<dbReference type="GO" id="GO:0050661">
    <property type="term" value="F:NADP binding"/>
    <property type="evidence" value="ECO:0007669"/>
    <property type="project" value="UniProtKB-UniRule"/>
</dbReference>
<dbReference type="GO" id="GO:0046983">
    <property type="term" value="F:protein dimerization activity"/>
    <property type="evidence" value="ECO:0007669"/>
    <property type="project" value="InterPro"/>
</dbReference>
<dbReference type="GO" id="GO:0071266">
    <property type="term" value="P:'de novo' L-methionine biosynthetic process"/>
    <property type="evidence" value="ECO:0007669"/>
    <property type="project" value="UniProtKB-UniRule"/>
</dbReference>
<dbReference type="GO" id="GO:0019877">
    <property type="term" value="P:diaminopimelate biosynthetic process"/>
    <property type="evidence" value="ECO:0007669"/>
    <property type="project" value="UniProtKB-UniRule"/>
</dbReference>
<dbReference type="GO" id="GO:0009097">
    <property type="term" value="P:isoleucine biosynthetic process"/>
    <property type="evidence" value="ECO:0007669"/>
    <property type="project" value="InterPro"/>
</dbReference>
<dbReference type="GO" id="GO:0009089">
    <property type="term" value="P:lysine biosynthetic process via diaminopimelate"/>
    <property type="evidence" value="ECO:0007669"/>
    <property type="project" value="UniProtKB-UniRule"/>
</dbReference>
<dbReference type="GO" id="GO:0009088">
    <property type="term" value="P:threonine biosynthetic process"/>
    <property type="evidence" value="ECO:0007669"/>
    <property type="project" value="UniProtKB-UniRule"/>
</dbReference>
<dbReference type="CDD" id="cd18131">
    <property type="entry name" value="ASADH_C_bac_euk_like"/>
    <property type="match status" value="1"/>
</dbReference>
<dbReference type="CDD" id="cd02316">
    <property type="entry name" value="VcASADH2_like_N"/>
    <property type="match status" value="1"/>
</dbReference>
<dbReference type="Gene3D" id="3.30.360.10">
    <property type="entry name" value="Dihydrodipicolinate Reductase, domain 2"/>
    <property type="match status" value="1"/>
</dbReference>
<dbReference type="Gene3D" id="3.40.50.720">
    <property type="entry name" value="NAD(P)-binding Rossmann-like Domain"/>
    <property type="match status" value="1"/>
</dbReference>
<dbReference type="HAMAP" id="MF_02121">
    <property type="entry name" value="ASADH"/>
    <property type="match status" value="1"/>
</dbReference>
<dbReference type="InterPro" id="IPR012080">
    <property type="entry name" value="Asp_semialdehyde_DH"/>
</dbReference>
<dbReference type="InterPro" id="IPR005986">
    <property type="entry name" value="Asp_semialdehyde_DH_beta"/>
</dbReference>
<dbReference type="InterPro" id="IPR036291">
    <property type="entry name" value="NAD(P)-bd_dom_sf"/>
</dbReference>
<dbReference type="InterPro" id="IPR000534">
    <property type="entry name" value="Semialdehyde_DH_NAD-bd"/>
</dbReference>
<dbReference type="InterPro" id="IPR012280">
    <property type="entry name" value="Semialdhyde_DH_dimer_dom"/>
</dbReference>
<dbReference type="NCBIfam" id="TIGR01296">
    <property type="entry name" value="asd_B"/>
    <property type="match status" value="1"/>
</dbReference>
<dbReference type="NCBIfam" id="NF004224">
    <property type="entry name" value="PRK05671.1"/>
    <property type="match status" value="1"/>
</dbReference>
<dbReference type="NCBIfam" id="NF005957">
    <property type="entry name" value="PRK08040.1"/>
    <property type="match status" value="1"/>
</dbReference>
<dbReference type="NCBIfam" id="NF011456">
    <property type="entry name" value="PRK14874.1"/>
    <property type="match status" value="1"/>
</dbReference>
<dbReference type="PANTHER" id="PTHR46278:SF2">
    <property type="entry name" value="ASPARTATE-SEMIALDEHYDE DEHYDROGENASE"/>
    <property type="match status" value="1"/>
</dbReference>
<dbReference type="PANTHER" id="PTHR46278">
    <property type="entry name" value="DEHYDROGENASE, PUTATIVE-RELATED"/>
    <property type="match status" value="1"/>
</dbReference>
<dbReference type="Pfam" id="PF01118">
    <property type="entry name" value="Semialdhyde_dh"/>
    <property type="match status" value="1"/>
</dbReference>
<dbReference type="Pfam" id="PF02774">
    <property type="entry name" value="Semialdhyde_dhC"/>
    <property type="match status" value="1"/>
</dbReference>
<dbReference type="PIRSF" id="PIRSF000148">
    <property type="entry name" value="ASA_dh"/>
    <property type="match status" value="1"/>
</dbReference>
<dbReference type="SMART" id="SM00859">
    <property type="entry name" value="Semialdhyde_dh"/>
    <property type="match status" value="1"/>
</dbReference>
<dbReference type="SUPFAM" id="SSF55347">
    <property type="entry name" value="Glyceraldehyde-3-phosphate dehydrogenase-like, C-terminal domain"/>
    <property type="match status" value="1"/>
</dbReference>
<dbReference type="SUPFAM" id="SSF51735">
    <property type="entry name" value="NAD(P)-binding Rossmann-fold domains"/>
    <property type="match status" value="1"/>
</dbReference>
<organism>
    <name type="scientific">Shewanella sp. (strain DB6705)</name>
    <dbReference type="NCBI Taxonomy" id="126830"/>
    <lineage>
        <taxon>Bacteria</taxon>
        <taxon>Pseudomonadati</taxon>
        <taxon>Pseudomonadota</taxon>
        <taxon>Gammaproteobacteria</taxon>
        <taxon>Alteromonadales</taxon>
        <taxon>Shewanellaceae</taxon>
        <taxon>Shewanella</taxon>
    </lineage>
</organism>
<comment type="function">
    <text evidence="1">Catalyzes the NADPH-dependent formation of L-aspartate-semialdehyde (L-ASA) by the reductive dephosphorylation of L-aspartyl-4-phosphate.</text>
</comment>
<comment type="catalytic activity">
    <reaction evidence="1">
        <text>L-aspartate 4-semialdehyde + phosphate + NADP(+) = 4-phospho-L-aspartate + NADPH + H(+)</text>
        <dbReference type="Rhea" id="RHEA:24284"/>
        <dbReference type="ChEBI" id="CHEBI:15378"/>
        <dbReference type="ChEBI" id="CHEBI:43474"/>
        <dbReference type="ChEBI" id="CHEBI:57535"/>
        <dbReference type="ChEBI" id="CHEBI:57783"/>
        <dbReference type="ChEBI" id="CHEBI:58349"/>
        <dbReference type="ChEBI" id="CHEBI:537519"/>
        <dbReference type="EC" id="1.2.1.11"/>
    </reaction>
</comment>
<comment type="pathway">
    <text evidence="1">Amino-acid biosynthesis; L-lysine biosynthesis via DAP pathway; (S)-tetrahydrodipicolinate from L-aspartate: step 2/4.</text>
</comment>
<comment type="pathway">
    <text evidence="1">Amino-acid biosynthesis; L-methionine biosynthesis via de novo pathway; L-homoserine from L-aspartate: step 2/3.</text>
</comment>
<comment type="pathway">
    <text evidence="1">Amino-acid biosynthesis; L-threonine biosynthesis; L-threonine from L-aspartate: step 2/5.</text>
</comment>
<comment type="subunit">
    <text evidence="1">Homodimer.</text>
</comment>
<comment type="similarity">
    <text evidence="1">Belongs to the aspartate-semialdehyde dehydrogenase family.</text>
</comment>
<sequence length="338" mass="36984">MSQEFNVVVLGASGAVGQTIIEILQERNFPIAKLFPLASSRSAGGTVSFNGKQVEILDVDDFDWSQAQIGFFSAGGDVSEKWAPIAAESGCVVIDNTSHFRYDNDVPLVIPEVNPEAIADFRNRNIIANPNCSTIQMLVALKPIYDAFGISRINVATYQSVSGSGKEAIAELAGQCSKLLQGLPIEPKVYSKQIAFNVLPQIDTFMENGYTKEEMKMVWETQKIFGDDNIVVNPTAVRVPVFFGHSEAIHLETIQPAEAEDVKAVLRDAPGIELFESNEEYPTAVTESAGTDPVYVGRVRKDISHSHGINLWVVSDNIRKGAALNSVQIAEVLIRDYY</sequence>
<keyword id="KW-0028">Amino-acid biosynthesis</keyword>
<keyword id="KW-0220">Diaminopimelate biosynthesis</keyword>
<keyword id="KW-0457">Lysine biosynthesis</keyword>
<keyword id="KW-0486">Methionine biosynthesis</keyword>
<keyword id="KW-0521">NADP</keyword>
<keyword id="KW-0560">Oxidoreductase</keyword>
<keyword id="KW-0791">Threonine biosynthesis</keyword>